<dbReference type="EC" id="1.2.1.70" evidence="1"/>
<dbReference type="EMBL" id="BA000028">
    <property type="protein sequence ID" value="BAC14026.1"/>
    <property type="molecule type" value="Genomic_DNA"/>
</dbReference>
<dbReference type="RefSeq" id="WP_011066465.1">
    <property type="nucleotide sequence ID" value="NC_004193.1"/>
</dbReference>
<dbReference type="SMR" id="Q8EPM7"/>
<dbReference type="STRING" id="221109.gene:10734316"/>
<dbReference type="KEGG" id="oih:OB2070"/>
<dbReference type="eggNOG" id="COG0373">
    <property type="taxonomic scope" value="Bacteria"/>
</dbReference>
<dbReference type="HOGENOM" id="CLU_035113_2_2_9"/>
<dbReference type="OrthoDB" id="110209at2"/>
<dbReference type="PhylomeDB" id="Q8EPM7"/>
<dbReference type="UniPathway" id="UPA00251">
    <property type="reaction ID" value="UER00316"/>
</dbReference>
<dbReference type="Proteomes" id="UP000000822">
    <property type="component" value="Chromosome"/>
</dbReference>
<dbReference type="GO" id="GO:0008883">
    <property type="term" value="F:glutamyl-tRNA reductase activity"/>
    <property type="evidence" value="ECO:0007669"/>
    <property type="project" value="UniProtKB-UniRule"/>
</dbReference>
<dbReference type="GO" id="GO:0050661">
    <property type="term" value="F:NADP binding"/>
    <property type="evidence" value="ECO:0007669"/>
    <property type="project" value="InterPro"/>
</dbReference>
<dbReference type="GO" id="GO:0019353">
    <property type="term" value="P:protoporphyrinogen IX biosynthetic process from glutamate"/>
    <property type="evidence" value="ECO:0007669"/>
    <property type="project" value="TreeGrafter"/>
</dbReference>
<dbReference type="CDD" id="cd05213">
    <property type="entry name" value="NAD_bind_Glutamyl_tRNA_reduct"/>
    <property type="match status" value="1"/>
</dbReference>
<dbReference type="FunFam" id="3.30.460.30:FF:000001">
    <property type="entry name" value="Glutamyl-tRNA reductase"/>
    <property type="match status" value="1"/>
</dbReference>
<dbReference type="FunFam" id="3.40.50.720:FF:000031">
    <property type="entry name" value="Glutamyl-tRNA reductase"/>
    <property type="match status" value="1"/>
</dbReference>
<dbReference type="Gene3D" id="3.30.460.30">
    <property type="entry name" value="Glutamyl-tRNA reductase, N-terminal domain"/>
    <property type="match status" value="1"/>
</dbReference>
<dbReference type="Gene3D" id="3.40.50.720">
    <property type="entry name" value="NAD(P)-binding Rossmann-like Domain"/>
    <property type="match status" value="1"/>
</dbReference>
<dbReference type="HAMAP" id="MF_00087">
    <property type="entry name" value="Glu_tRNA_reductase"/>
    <property type="match status" value="1"/>
</dbReference>
<dbReference type="InterPro" id="IPR000343">
    <property type="entry name" value="4pyrrol_synth_GluRdtase"/>
</dbReference>
<dbReference type="InterPro" id="IPR015896">
    <property type="entry name" value="4pyrrol_synth_GluRdtase_dimer"/>
</dbReference>
<dbReference type="InterPro" id="IPR015895">
    <property type="entry name" value="4pyrrol_synth_GluRdtase_N"/>
</dbReference>
<dbReference type="InterPro" id="IPR018214">
    <property type="entry name" value="GluRdtase_CS"/>
</dbReference>
<dbReference type="InterPro" id="IPR036453">
    <property type="entry name" value="GluRdtase_dimer_dom_sf"/>
</dbReference>
<dbReference type="InterPro" id="IPR036343">
    <property type="entry name" value="GluRdtase_N_sf"/>
</dbReference>
<dbReference type="InterPro" id="IPR036291">
    <property type="entry name" value="NAD(P)-bd_dom_sf"/>
</dbReference>
<dbReference type="InterPro" id="IPR006151">
    <property type="entry name" value="Shikm_DH/Glu-tRNA_Rdtase"/>
</dbReference>
<dbReference type="NCBIfam" id="TIGR01035">
    <property type="entry name" value="hemA"/>
    <property type="match status" value="1"/>
</dbReference>
<dbReference type="NCBIfam" id="NF000744">
    <property type="entry name" value="PRK00045.1-3"/>
    <property type="match status" value="1"/>
</dbReference>
<dbReference type="PANTHER" id="PTHR43013">
    <property type="entry name" value="GLUTAMYL-TRNA REDUCTASE"/>
    <property type="match status" value="1"/>
</dbReference>
<dbReference type="PANTHER" id="PTHR43013:SF1">
    <property type="entry name" value="GLUTAMYL-TRNA REDUCTASE"/>
    <property type="match status" value="1"/>
</dbReference>
<dbReference type="Pfam" id="PF00745">
    <property type="entry name" value="GlutR_dimer"/>
    <property type="match status" value="1"/>
</dbReference>
<dbReference type="Pfam" id="PF05201">
    <property type="entry name" value="GlutR_N"/>
    <property type="match status" value="1"/>
</dbReference>
<dbReference type="Pfam" id="PF01488">
    <property type="entry name" value="Shikimate_DH"/>
    <property type="match status" value="1"/>
</dbReference>
<dbReference type="PIRSF" id="PIRSF000445">
    <property type="entry name" value="4pyrrol_synth_GluRdtase"/>
    <property type="match status" value="1"/>
</dbReference>
<dbReference type="SUPFAM" id="SSF69742">
    <property type="entry name" value="Glutamyl tRNA-reductase catalytic, N-terminal domain"/>
    <property type="match status" value="1"/>
</dbReference>
<dbReference type="SUPFAM" id="SSF69075">
    <property type="entry name" value="Glutamyl tRNA-reductase dimerization domain"/>
    <property type="match status" value="1"/>
</dbReference>
<dbReference type="SUPFAM" id="SSF51735">
    <property type="entry name" value="NAD(P)-binding Rossmann-fold domains"/>
    <property type="match status" value="1"/>
</dbReference>
<dbReference type="PROSITE" id="PS00747">
    <property type="entry name" value="GLUTR"/>
    <property type="match status" value="1"/>
</dbReference>
<protein>
    <recommendedName>
        <fullName evidence="1">Glutamyl-tRNA reductase</fullName>
        <shortName evidence="1">GluTR</shortName>
        <ecNumber evidence="1">1.2.1.70</ecNumber>
    </recommendedName>
</protein>
<sequence length="457" mass="51544">MHILKVGFNYKTTPVDIREKFTFSEDSLQDAMVELKNQKSILEDVIISTCNRTEIYAVVDQLHTGRYYIKQFLSNWFGIEKEEFSTYLRITEDDGAMEHLFRVSTGLDSMVLGETQILGQVKQAFLNSQQVNTTGTIFNELFKQAITFGKRAHKETAIGEHAVSISYAAVELAKKIFGDLQEKHVAILGAGKMGELAAKNIQGSGATKITVVNRTLENANEMAEKFNADVESIDQLPVILQQADILISSTGADSIVVTKEMMEKVQKQRKGRALFLVDIAVPRDMDPAISELENVFLYDIDNLQHIVDDNLESRKQAAEKIELLIEEEIVTFKEWLKTLGVIPVISALRQKALTIQAETMQSIERKIPNLTDRERKVLNKHTKSIINQLLKEPVTQAKEFAGKDNAEDSLQLFINIFGIEEEVKEELVKHAKKNETLMKIAKEEPSSFPIIEKITTA</sequence>
<proteinExistence type="inferred from homology"/>
<name>HEM1_OCEIH</name>
<feature type="chain" id="PRO_0000114049" description="Glutamyl-tRNA reductase">
    <location>
        <begin position="1"/>
        <end position="457"/>
    </location>
</feature>
<feature type="active site" description="Nucleophile" evidence="1">
    <location>
        <position position="50"/>
    </location>
</feature>
<feature type="binding site" evidence="1">
    <location>
        <begin position="49"/>
        <end position="52"/>
    </location>
    <ligand>
        <name>substrate</name>
    </ligand>
</feature>
<feature type="binding site" evidence="1">
    <location>
        <position position="109"/>
    </location>
    <ligand>
        <name>substrate</name>
    </ligand>
</feature>
<feature type="binding site" evidence="1">
    <location>
        <begin position="114"/>
        <end position="116"/>
    </location>
    <ligand>
        <name>substrate</name>
    </ligand>
</feature>
<feature type="binding site" evidence="1">
    <location>
        <position position="120"/>
    </location>
    <ligand>
        <name>substrate</name>
    </ligand>
</feature>
<feature type="binding site" evidence="1">
    <location>
        <begin position="189"/>
        <end position="194"/>
    </location>
    <ligand>
        <name>NADP(+)</name>
        <dbReference type="ChEBI" id="CHEBI:58349"/>
    </ligand>
</feature>
<feature type="site" description="Important for activity" evidence="1">
    <location>
        <position position="99"/>
    </location>
</feature>
<comment type="function">
    <text evidence="1">Catalyzes the NADPH-dependent reduction of glutamyl-tRNA(Glu) to glutamate 1-semialdehyde (GSA).</text>
</comment>
<comment type="catalytic activity">
    <reaction evidence="1">
        <text>(S)-4-amino-5-oxopentanoate + tRNA(Glu) + NADP(+) = L-glutamyl-tRNA(Glu) + NADPH + H(+)</text>
        <dbReference type="Rhea" id="RHEA:12344"/>
        <dbReference type="Rhea" id="RHEA-COMP:9663"/>
        <dbReference type="Rhea" id="RHEA-COMP:9680"/>
        <dbReference type="ChEBI" id="CHEBI:15378"/>
        <dbReference type="ChEBI" id="CHEBI:57501"/>
        <dbReference type="ChEBI" id="CHEBI:57783"/>
        <dbReference type="ChEBI" id="CHEBI:58349"/>
        <dbReference type="ChEBI" id="CHEBI:78442"/>
        <dbReference type="ChEBI" id="CHEBI:78520"/>
        <dbReference type="EC" id="1.2.1.70"/>
    </reaction>
</comment>
<comment type="pathway">
    <text evidence="1">Porphyrin-containing compound metabolism; protoporphyrin-IX biosynthesis; 5-aminolevulinate from L-glutamyl-tRNA(Glu): step 1/2.</text>
</comment>
<comment type="subunit">
    <text evidence="1">Homodimer.</text>
</comment>
<comment type="domain">
    <text evidence="1">Possesses an unusual extended V-shaped dimeric structure with each monomer consisting of three distinct domains arranged along a curved 'spinal' alpha-helix. The N-terminal catalytic domain specifically recognizes the glutamate moiety of the substrate. The second domain is the NADPH-binding domain, and the third C-terminal domain is responsible for dimerization.</text>
</comment>
<comment type="miscellaneous">
    <text evidence="1">During catalysis, the active site Cys acts as a nucleophile attacking the alpha-carbonyl group of tRNA-bound glutamate with the formation of a thioester intermediate between enzyme and glutamate, and the concomitant release of tRNA(Glu). The thioester intermediate is finally reduced by direct hydride transfer from NADPH, to form the product GSA.</text>
</comment>
<comment type="similarity">
    <text evidence="1">Belongs to the glutamyl-tRNA reductase family.</text>
</comment>
<accession>Q8EPM7</accession>
<organism>
    <name type="scientific">Oceanobacillus iheyensis (strain DSM 14371 / CIP 107618 / JCM 11309 / KCTC 3954 / HTE831)</name>
    <dbReference type="NCBI Taxonomy" id="221109"/>
    <lineage>
        <taxon>Bacteria</taxon>
        <taxon>Bacillati</taxon>
        <taxon>Bacillota</taxon>
        <taxon>Bacilli</taxon>
        <taxon>Bacillales</taxon>
        <taxon>Bacillaceae</taxon>
        <taxon>Oceanobacillus</taxon>
    </lineage>
</organism>
<gene>
    <name evidence="1" type="primary">hemA</name>
    <name type="ordered locus">OB2070</name>
</gene>
<evidence type="ECO:0000255" key="1">
    <source>
        <dbReference type="HAMAP-Rule" id="MF_00087"/>
    </source>
</evidence>
<reference key="1">
    <citation type="journal article" date="2002" name="Nucleic Acids Res.">
        <title>Genome sequence of Oceanobacillus iheyensis isolated from the Iheya Ridge and its unexpected adaptive capabilities to extreme environments.</title>
        <authorList>
            <person name="Takami H."/>
            <person name="Takaki Y."/>
            <person name="Uchiyama I."/>
        </authorList>
    </citation>
    <scope>NUCLEOTIDE SEQUENCE [LARGE SCALE GENOMIC DNA]</scope>
    <source>
        <strain>DSM 14371 / CIP 107618 / JCM 11309 / KCTC 3954 / HTE831</strain>
    </source>
</reference>
<keyword id="KW-0521">NADP</keyword>
<keyword id="KW-0560">Oxidoreductase</keyword>
<keyword id="KW-0627">Porphyrin biosynthesis</keyword>
<keyword id="KW-1185">Reference proteome</keyword>